<reference key="1">
    <citation type="submission" date="2008-05" db="EMBL/GenBank/DDBJ databases">
        <title>Complete sequence of Shigella boydii serotype 18 strain BS512.</title>
        <authorList>
            <person name="Rasko D.A."/>
            <person name="Rosovitz M."/>
            <person name="Maurelli A.T."/>
            <person name="Myers G."/>
            <person name="Seshadri R."/>
            <person name="Cer R."/>
            <person name="Jiang L."/>
            <person name="Ravel J."/>
            <person name="Sebastian Y."/>
        </authorList>
    </citation>
    <scope>NUCLEOTIDE SEQUENCE [LARGE SCALE GENOMIC DNA]</scope>
    <source>
        <strain>CDC 3083-94 / BS512</strain>
    </source>
</reference>
<name>SECB_SHIB3</name>
<sequence>MSEQNNTEMTFQIQRIYTKDISFEAPNAPHVFQKDWQPEVKLDLDTASSQLADDVYEVVLRVTVTASLGEETAFLCEVQQGGIFSIAGIEGTQMAHCLGAYCPNILFPYARECITSMVSRGTFPQLNLAPVNFDALFMNYLQQQAGEGTEEHQDA</sequence>
<accession>B2U5C8</accession>
<comment type="function">
    <text evidence="1">One of the proteins required for the normal export of preproteins out of the cell cytoplasm. It is a molecular chaperone that binds to a subset of precursor proteins, maintaining them in a translocation-competent state. It also specifically binds to its receptor SecA.</text>
</comment>
<comment type="subunit">
    <text evidence="1">Homotetramer, a dimer of dimers. One homotetramer interacts with 1 SecA dimer.</text>
</comment>
<comment type="subcellular location">
    <subcellularLocation>
        <location evidence="1">Cytoplasm</location>
    </subcellularLocation>
</comment>
<comment type="similarity">
    <text evidence="1">Belongs to the SecB family.</text>
</comment>
<organism>
    <name type="scientific">Shigella boydii serotype 18 (strain CDC 3083-94 / BS512)</name>
    <dbReference type="NCBI Taxonomy" id="344609"/>
    <lineage>
        <taxon>Bacteria</taxon>
        <taxon>Pseudomonadati</taxon>
        <taxon>Pseudomonadota</taxon>
        <taxon>Gammaproteobacteria</taxon>
        <taxon>Enterobacterales</taxon>
        <taxon>Enterobacteriaceae</taxon>
        <taxon>Shigella</taxon>
    </lineage>
</organism>
<feature type="chain" id="PRO_1000195349" description="Protein-export protein SecB">
    <location>
        <begin position="1"/>
        <end position="155"/>
    </location>
</feature>
<proteinExistence type="inferred from homology"/>
<keyword id="KW-0143">Chaperone</keyword>
<keyword id="KW-0963">Cytoplasm</keyword>
<keyword id="KW-0653">Protein transport</keyword>
<keyword id="KW-1185">Reference proteome</keyword>
<keyword id="KW-0811">Translocation</keyword>
<keyword id="KW-0813">Transport</keyword>
<protein>
    <recommendedName>
        <fullName evidence="1">Protein-export protein SecB</fullName>
    </recommendedName>
</protein>
<evidence type="ECO:0000255" key="1">
    <source>
        <dbReference type="HAMAP-Rule" id="MF_00821"/>
    </source>
</evidence>
<dbReference type="EMBL" id="CP001063">
    <property type="protein sequence ID" value="ACD09205.1"/>
    <property type="molecule type" value="Genomic_DNA"/>
</dbReference>
<dbReference type="RefSeq" id="WP_000003377.1">
    <property type="nucleotide sequence ID" value="NC_010658.1"/>
</dbReference>
<dbReference type="SMR" id="B2U5C8"/>
<dbReference type="STRING" id="344609.SbBS512_E4037"/>
<dbReference type="GeneID" id="86944403"/>
<dbReference type="KEGG" id="sbc:SbBS512_E4037"/>
<dbReference type="HOGENOM" id="CLU_111574_1_0_6"/>
<dbReference type="Proteomes" id="UP000001030">
    <property type="component" value="Chromosome"/>
</dbReference>
<dbReference type="GO" id="GO:0005737">
    <property type="term" value="C:cytoplasm"/>
    <property type="evidence" value="ECO:0007669"/>
    <property type="project" value="UniProtKB-SubCell"/>
</dbReference>
<dbReference type="GO" id="GO:0051082">
    <property type="term" value="F:unfolded protein binding"/>
    <property type="evidence" value="ECO:0007669"/>
    <property type="project" value="InterPro"/>
</dbReference>
<dbReference type="GO" id="GO:0006457">
    <property type="term" value="P:protein folding"/>
    <property type="evidence" value="ECO:0007669"/>
    <property type="project" value="UniProtKB-UniRule"/>
</dbReference>
<dbReference type="GO" id="GO:0051262">
    <property type="term" value="P:protein tetramerization"/>
    <property type="evidence" value="ECO:0007669"/>
    <property type="project" value="InterPro"/>
</dbReference>
<dbReference type="GO" id="GO:0015031">
    <property type="term" value="P:protein transport"/>
    <property type="evidence" value="ECO:0007669"/>
    <property type="project" value="UniProtKB-UniRule"/>
</dbReference>
<dbReference type="CDD" id="cd00557">
    <property type="entry name" value="Translocase_SecB"/>
    <property type="match status" value="1"/>
</dbReference>
<dbReference type="FunFam" id="3.10.420.10:FF:000001">
    <property type="entry name" value="Protein-export chaperone SecB"/>
    <property type="match status" value="1"/>
</dbReference>
<dbReference type="Gene3D" id="3.10.420.10">
    <property type="entry name" value="SecB-like"/>
    <property type="match status" value="1"/>
</dbReference>
<dbReference type="HAMAP" id="MF_00821">
    <property type="entry name" value="SecB"/>
    <property type="match status" value="1"/>
</dbReference>
<dbReference type="InterPro" id="IPR003708">
    <property type="entry name" value="SecB"/>
</dbReference>
<dbReference type="InterPro" id="IPR035958">
    <property type="entry name" value="SecB-like_sf"/>
</dbReference>
<dbReference type="NCBIfam" id="NF004390">
    <property type="entry name" value="PRK05751.1-1"/>
    <property type="match status" value="1"/>
</dbReference>
<dbReference type="NCBIfam" id="NF004393">
    <property type="entry name" value="PRK05751.1-4"/>
    <property type="match status" value="1"/>
</dbReference>
<dbReference type="NCBIfam" id="TIGR00809">
    <property type="entry name" value="secB"/>
    <property type="match status" value="1"/>
</dbReference>
<dbReference type="PANTHER" id="PTHR36918">
    <property type="match status" value="1"/>
</dbReference>
<dbReference type="PANTHER" id="PTHR36918:SF1">
    <property type="entry name" value="PROTEIN-EXPORT PROTEIN SECB"/>
    <property type="match status" value="1"/>
</dbReference>
<dbReference type="Pfam" id="PF02556">
    <property type="entry name" value="SecB"/>
    <property type="match status" value="1"/>
</dbReference>
<dbReference type="PRINTS" id="PR01594">
    <property type="entry name" value="SECBCHAPRONE"/>
</dbReference>
<dbReference type="SUPFAM" id="SSF54611">
    <property type="entry name" value="SecB-like"/>
    <property type="match status" value="1"/>
</dbReference>
<gene>
    <name evidence="1" type="primary">secB</name>
    <name type="ordered locus">SbBS512_E4037</name>
</gene>